<gene>
    <name evidence="1" type="primary">pgk</name>
    <name type="ordered locus">RSal33209_2270</name>
</gene>
<name>PGK_RENSM</name>
<reference key="1">
    <citation type="journal article" date="2008" name="J. Bacteriol.">
        <title>Genome sequence of the fish pathogen Renibacterium salmoninarum suggests reductive evolution away from an environmental Arthrobacter ancestor.</title>
        <authorList>
            <person name="Wiens G.D."/>
            <person name="Rockey D.D."/>
            <person name="Wu Z."/>
            <person name="Chang J."/>
            <person name="Levy R."/>
            <person name="Crane S."/>
            <person name="Chen D.S."/>
            <person name="Capri G.R."/>
            <person name="Burnett J.R."/>
            <person name="Sudheesh P.S."/>
            <person name="Schipma M.J."/>
            <person name="Burd H."/>
            <person name="Bhattacharyya A."/>
            <person name="Rhodes L.D."/>
            <person name="Kaul R."/>
            <person name="Strom M.S."/>
        </authorList>
    </citation>
    <scope>NUCLEOTIDE SEQUENCE [LARGE SCALE GENOMIC DNA]</scope>
    <source>
        <strain>ATCC 33209 / DSM 20767 / JCM 11484 / NBRC 15589 / NCIMB 2235</strain>
    </source>
</reference>
<feature type="chain" id="PRO_1000076600" description="Phosphoglycerate kinase">
    <location>
        <begin position="1"/>
        <end position="417"/>
    </location>
</feature>
<feature type="binding site" evidence="1">
    <location>
        <begin position="24"/>
        <end position="26"/>
    </location>
    <ligand>
        <name>substrate</name>
    </ligand>
</feature>
<feature type="binding site" evidence="1">
    <location>
        <position position="44"/>
    </location>
    <ligand>
        <name>substrate</name>
    </ligand>
</feature>
<feature type="binding site" evidence="1">
    <location>
        <begin position="67"/>
        <end position="70"/>
    </location>
    <ligand>
        <name>substrate</name>
    </ligand>
</feature>
<feature type="binding site" evidence="1">
    <location>
        <position position="126"/>
    </location>
    <ligand>
        <name>substrate</name>
    </ligand>
</feature>
<feature type="binding site" evidence="1">
    <location>
        <position position="170"/>
    </location>
    <ligand>
        <name>substrate</name>
    </ligand>
</feature>
<feature type="binding site" evidence="1">
    <location>
        <position position="220"/>
    </location>
    <ligand>
        <name>ATP</name>
        <dbReference type="ChEBI" id="CHEBI:30616"/>
    </ligand>
</feature>
<feature type="binding site" evidence="1">
    <location>
        <position position="316"/>
    </location>
    <ligand>
        <name>ATP</name>
        <dbReference type="ChEBI" id="CHEBI:30616"/>
    </ligand>
</feature>
<feature type="binding site" evidence="1">
    <location>
        <position position="347"/>
    </location>
    <ligand>
        <name>ATP</name>
        <dbReference type="ChEBI" id="CHEBI:30616"/>
    </ligand>
</feature>
<feature type="binding site" evidence="1">
    <location>
        <begin position="373"/>
        <end position="376"/>
    </location>
    <ligand>
        <name>ATP</name>
        <dbReference type="ChEBI" id="CHEBI:30616"/>
    </ligand>
</feature>
<comment type="catalytic activity">
    <reaction evidence="1">
        <text>(2R)-3-phosphoglycerate + ATP = (2R)-3-phospho-glyceroyl phosphate + ADP</text>
        <dbReference type="Rhea" id="RHEA:14801"/>
        <dbReference type="ChEBI" id="CHEBI:30616"/>
        <dbReference type="ChEBI" id="CHEBI:57604"/>
        <dbReference type="ChEBI" id="CHEBI:58272"/>
        <dbReference type="ChEBI" id="CHEBI:456216"/>
        <dbReference type="EC" id="2.7.2.3"/>
    </reaction>
</comment>
<comment type="pathway">
    <text evidence="1">Carbohydrate degradation; glycolysis; pyruvate from D-glyceraldehyde 3-phosphate: step 2/5.</text>
</comment>
<comment type="subunit">
    <text evidence="1">Monomer.</text>
</comment>
<comment type="subcellular location">
    <subcellularLocation>
        <location evidence="1">Cytoplasm</location>
    </subcellularLocation>
</comment>
<comment type="similarity">
    <text evidence="1">Belongs to the phosphoglycerate kinase family.</text>
</comment>
<proteinExistence type="inferred from homology"/>
<accession>A9WT63</accession>
<evidence type="ECO:0000255" key="1">
    <source>
        <dbReference type="HAMAP-Rule" id="MF_00145"/>
    </source>
</evidence>
<organism>
    <name type="scientific">Renibacterium salmoninarum (strain ATCC 33209 / DSM 20767 / JCM 11484 / NBRC 15589 / NCIMB 2235)</name>
    <dbReference type="NCBI Taxonomy" id="288705"/>
    <lineage>
        <taxon>Bacteria</taxon>
        <taxon>Bacillati</taxon>
        <taxon>Actinomycetota</taxon>
        <taxon>Actinomycetes</taxon>
        <taxon>Micrococcales</taxon>
        <taxon>Micrococcaceae</taxon>
        <taxon>Renibacterium</taxon>
    </lineage>
</organism>
<dbReference type="EC" id="2.7.2.3" evidence="1"/>
<dbReference type="EMBL" id="CP000910">
    <property type="protein sequence ID" value="ABY24001.1"/>
    <property type="molecule type" value="Genomic_DNA"/>
</dbReference>
<dbReference type="RefSeq" id="WP_012245666.1">
    <property type="nucleotide sequence ID" value="NC_010168.1"/>
</dbReference>
<dbReference type="SMR" id="A9WT63"/>
<dbReference type="STRING" id="288705.RSal33209_2270"/>
<dbReference type="KEGG" id="rsa:RSal33209_2270"/>
<dbReference type="eggNOG" id="COG0126">
    <property type="taxonomic scope" value="Bacteria"/>
</dbReference>
<dbReference type="HOGENOM" id="CLU_025427_0_2_11"/>
<dbReference type="UniPathway" id="UPA00109">
    <property type="reaction ID" value="UER00185"/>
</dbReference>
<dbReference type="Proteomes" id="UP000002007">
    <property type="component" value="Chromosome"/>
</dbReference>
<dbReference type="GO" id="GO:0005829">
    <property type="term" value="C:cytosol"/>
    <property type="evidence" value="ECO:0007669"/>
    <property type="project" value="TreeGrafter"/>
</dbReference>
<dbReference type="GO" id="GO:0043531">
    <property type="term" value="F:ADP binding"/>
    <property type="evidence" value="ECO:0007669"/>
    <property type="project" value="TreeGrafter"/>
</dbReference>
<dbReference type="GO" id="GO:0005524">
    <property type="term" value="F:ATP binding"/>
    <property type="evidence" value="ECO:0007669"/>
    <property type="project" value="UniProtKB-KW"/>
</dbReference>
<dbReference type="GO" id="GO:0004618">
    <property type="term" value="F:phosphoglycerate kinase activity"/>
    <property type="evidence" value="ECO:0007669"/>
    <property type="project" value="UniProtKB-UniRule"/>
</dbReference>
<dbReference type="GO" id="GO:0006094">
    <property type="term" value="P:gluconeogenesis"/>
    <property type="evidence" value="ECO:0007669"/>
    <property type="project" value="TreeGrafter"/>
</dbReference>
<dbReference type="GO" id="GO:0006096">
    <property type="term" value="P:glycolytic process"/>
    <property type="evidence" value="ECO:0007669"/>
    <property type="project" value="UniProtKB-UniRule"/>
</dbReference>
<dbReference type="FunFam" id="3.40.50.1260:FF:000007">
    <property type="entry name" value="Phosphoglycerate kinase"/>
    <property type="match status" value="1"/>
</dbReference>
<dbReference type="Gene3D" id="3.40.50.1260">
    <property type="entry name" value="Phosphoglycerate kinase, N-terminal domain"/>
    <property type="match status" value="2"/>
</dbReference>
<dbReference type="HAMAP" id="MF_00145">
    <property type="entry name" value="Phosphoglyc_kinase"/>
    <property type="match status" value="1"/>
</dbReference>
<dbReference type="InterPro" id="IPR001576">
    <property type="entry name" value="Phosphoglycerate_kinase"/>
</dbReference>
<dbReference type="InterPro" id="IPR015824">
    <property type="entry name" value="Phosphoglycerate_kinase_N"/>
</dbReference>
<dbReference type="InterPro" id="IPR036043">
    <property type="entry name" value="Phosphoglycerate_kinase_sf"/>
</dbReference>
<dbReference type="PANTHER" id="PTHR11406">
    <property type="entry name" value="PHOSPHOGLYCERATE KINASE"/>
    <property type="match status" value="1"/>
</dbReference>
<dbReference type="PANTHER" id="PTHR11406:SF23">
    <property type="entry name" value="PHOSPHOGLYCERATE KINASE 1, CHLOROPLASTIC-RELATED"/>
    <property type="match status" value="1"/>
</dbReference>
<dbReference type="Pfam" id="PF00162">
    <property type="entry name" value="PGK"/>
    <property type="match status" value="1"/>
</dbReference>
<dbReference type="PIRSF" id="PIRSF000724">
    <property type="entry name" value="Pgk"/>
    <property type="match status" value="1"/>
</dbReference>
<dbReference type="PRINTS" id="PR00477">
    <property type="entry name" value="PHGLYCKINASE"/>
</dbReference>
<dbReference type="SUPFAM" id="SSF53748">
    <property type="entry name" value="Phosphoglycerate kinase"/>
    <property type="match status" value="1"/>
</dbReference>
<sequence>MTLHTLDELLADGVQGRYVLVRSDLNVPLSGAEDTNLTVTDDGRIRASLPVIEKLAAAGARVLVLAHLGRPKGAPEAKYSLRPAADRLAELASVPVSLAADTSGESAQKAAAELADGQVLVLENVRFDPRETSKDDAERAAFAAELAELAASGADKEAAYVDDAFGAVHRKHASVFDLALKLPSFHGDLVRTELDVLRKLTDSPERPYVVVLGGSKVSDKLAVIENLIGKADSILVGGGMLFTFLAAQGHEVGASLLESDQIDTVKDYLARAEAAGTSFVLPTDVVVASKFAADAAHELVAAQAIESSSFGAAGIGLDIGPETSQAFAEQISAAKTVFWNGPMGVFEFAAFASGTRAVAQALADSAAFSVVGGGDSAAAVRTLGFADNAFGHISTGGGASLEFLEGKELPGLTALDR</sequence>
<keyword id="KW-0067">ATP-binding</keyword>
<keyword id="KW-0963">Cytoplasm</keyword>
<keyword id="KW-0324">Glycolysis</keyword>
<keyword id="KW-0418">Kinase</keyword>
<keyword id="KW-0547">Nucleotide-binding</keyword>
<keyword id="KW-1185">Reference proteome</keyword>
<keyword id="KW-0808">Transferase</keyword>
<protein>
    <recommendedName>
        <fullName evidence="1">Phosphoglycerate kinase</fullName>
        <ecNumber evidence="1">2.7.2.3</ecNumber>
    </recommendedName>
</protein>